<name>HNK2_XENLA</name>
<dbReference type="EMBL" id="L10327">
    <property type="protein sequence ID" value="AAA72342.1"/>
    <property type="molecule type" value="mRNA"/>
</dbReference>
<dbReference type="EMBL" id="S65507">
    <property type="protein sequence ID" value="AAB28271.2"/>
    <property type="molecule type" value="mRNA"/>
</dbReference>
<dbReference type="RefSeq" id="NP_001079091.1">
    <property type="nucleotide sequence ID" value="NM_001085622.1"/>
</dbReference>
<dbReference type="SMR" id="P42587"/>
<dbReference type="GeneID" id="373624"/>
<dbReference type="KEGG" id="xla:373624"/>
<dbReference type="AGR" id="Xenbase:XB-GENE-864842"/>
<dbReference type="CTD" id="373624"/>
<dbReference type="Xenbase" id="XB-GENE-864842">
    <property type="gene designation" value="nkx2-2.S"/>
</dbReference>
<dbReference type="OrthoDB" id="6159439at2759"/>
<dbReference type="Proteomes" id="UP000186698">
    <property type="component" value="Chromosome 5S"/>
</dbReference>
<dbReference type="Bgee" id="373624">
    <property type="expression patterns" value="Expressed in neurula embryo and 3 other cell types or tissues"/>
</dbReference>
<dbReference type="GO" id="GO:0005634">
    <property type="term" value="C:nucleus"/>
    <property type="evidence" value="ECO:0000318"/>
    <property type="project" value="GO_Central"/>
</dbReference>
<dbReference type="GO" id="GO:0000981">
    <property type="term" value="F:DNA-binding transcription factor activity, RNA polymerase II-specific"/>
    <property type="evidence" value="ECO:0000318"/>
    <property type="project" value="GO_Central"/>
</dbReference>
<dbReference type="GO" id="GO:0000978">
    <property type="term" value="F:RNA polymerase II cis-regulatory region sequence-specific DNA binding"/>
    <property type="evidence" value="ECO:0000318"/>
    <property type="project" value="GO_Central"/>
</dbReference>
<dbReference type="GO" id="GO:0030154">
    <property type="term" value="P:cell differentiation"/>
    <property type="evidence" value="ECO:0000318"/>
    <property type="project" value="GO_Central"/>
</dbReference>
<dbReference type="GO" id="GO:0006357">
    <property type="term" value="P:regulation of transcription by RNA polymerase II"/>
    <property type="evidence" value="ECO:0000318"/>
    <property type="project" value="GO_Central"/>
</dbReference>
<dbReference type="CDD" id="cd00086">
    <property type="entry name" value="homeodomain"/>
    <property type="match status" value="1"/>
</dbReference>
<dbReference type="FunFam" id="1.10.10.60:FF:000101">
    <property type="entry name" value="NK2 homeobox 8"/>
    <property type="match status" value="1"/>
</dbReference>
<dbReference type="Gene3D" id="1.10.10.60">
    <property type="entry name" value="Homeodomain-like"/>
    <property type="match status" value="1"/>
</dbReference>
<dbReference type="InterPro" id="IPR001356">
    <property type="entry name" value="HD"/>
</dbReference>
<dbReference type="InterPro" id="IPR020479">
    <property type="entry name" value="HD_metazoa"/>
</dbReference>
<dbReference type="InterPro" id="IPR017970">
    <property type="entry name" value="Homeobox_CS"/>
</dbReference>
<dbReference type="InterPro" id="IPR050394">
    <property type="entry name" value="Homeobox_NK-like"/>
</dbReference>
<dbReference type="InterPro" id="IPR009057">
    <property type="entry name" value="Homeodomain-like_sf"/>
</dbReference>
<dbReference type="PANTHER" id="PTHR24340">
    <property type="entry name" value="HOMEOBOX PROTEIN NKX"/>
    <property type="match status" value="1"/>
</dbReference>
<dbReference type="PANTHER" id="PTHR24340:SF24">
    <property type="entry name" value="HOMEOBOX PROTEIN NKX-2.2"/>
    <property type="match status" value="1"/>
</dbReference>
<dbReference type="Pfam" id="PF00046">
    <property type="entry name" value="Homeodomain"/>
    <property type="match status" value="1"/>
</dbReference>
<dbReference type="PRINTS" id="PR00024">
    <property type="entry name" value="HOMEOBOX"/>
</dbReference>
<dbReference type="SMART" id="SM00389">
    <property type="entry name" value="HOX"/>
    <property type="match status" value="1"/>
</dbReference>
<dbReference type="SUPFAM" id="SSF46689">
    <property type="entry name" value="Homeodomain-like"/>
    <property type="match status" value="1"/>
</dbReference>
<dbReference type="PROSITE" id="PS00027">
    <property type="entry name" value="HOMEOBOX_1"/>
    <property type="match status" value="1"/>
</dbReference>
<dbReference type="PROSITE" id="PS50071">
    <property type="entry name" value="HOMEOBOX_2"/>
    <property type="match status" value="1"/>
</dbReference>
<comment type="function">
    <text>Defines dorsal-ventral domains in developing brain. May play a role in defining positional information along the anterior-posterior (a/p) axis and the dorsal-ventral (d/v) axis of the developing nervous system. May be involved in determining positional or boundary information rather than determining a given cell type.</text>
</comment>
<comment type="subcellular location">
    <subcellularLocation>
        <location evidence="3">Nucleus</location>
    </subcellularLocation>
</comment>
<comment type="tissue specificity">
    <text>Forebrain and midbrain.</text>
</comment>
<comment type="developmental stage">
    <text>Is first detectable at the neural plate stage (stage 14). Levels gradually increase during later neurula stages, and becomes fairly constant throughout tailbud and hatching stages before declining at late swimming tadpole stages.</text>
</comment>
<comment type="similarity">
    <text evidence="3">Belongs to the NK-2 homeobox family.</text>
</comment>
<organism>
    <name type="scientific">Xenopus laevis</name>
    <name type="common">African clawed frog</name>
    <dbReference type="NCBI Taxonomy" id="8355"/>
    <lineage>
        <taxon>Eukaryota</taxon>
        <taxon>Metazoa</taxon>
        <taxon>Chordata</taxon>
        <taxon>Craniata</taxon>
        <taxon>Vertebrata</taxon>
        <taxon>Euteleostomi</taxon>
        <taxon>Amphibia</taxon>
        <taxon>Batrachia</taxon>
        <taxon>Anura</taxon>
        <taxon>Pipoidea</taxon>
        <taxon>Pipidae</taxon>
        <taxon>Xenopodinae</taxon>
        <taxon>Xenopus</taxon>
        <taxon>Xenopus</taxon>
    </lineage>
</organism>
<keyword id="KW-0217">Developmental protein</keyword>
<keyword id="KW-0238">DNA-binding</keyword>
<keyword id="KW-0371">Homeobox</keyword>
<keyword id="KW-0539">Nucleus</keyword>
<keyword id="KW-1185">Reference proteome</keyword>
<feature type="chain" id="PRO_0000049127" description="Homeobox protein XENK-2">
    <location>
        <begin position="1"/>
        <end position="196"/>
    </location>
</feature>
<feature type="DNA-binding region" description="Homeobox" evidence="1">
    <location>
        <begin position="69"/>
        <end position="128"/>
    </location>
</feature>
<feature type="region of interest" description="Disordered" evidence="2">
    <location>
        <begin position="48"/>
        <end position="72"/>
    </location>
</feature>
<protein>
    <recommendedName>
        <fullName>Homeobox protein XENK-2</fullName>
    </recommendedName>
</protein>
<evidence type="ECO:0000255" key="1">
    <source>
        <dbReference type="PROSITE-ProRule" id="PRU00108"/>
    </source>
</evidence>
<evidence type="ECO:0000256" key="2">
    <source>
        <dbReference type="SAM" id="MobiDB-lite"/>
    </source>
</evidence>
<evidence type="ECO:0000305" key="3"/>
<sequence length="196" mass="22809">MPLKSPFYDSSDNLIHDGWLLLRASNTPCTVLRPEIRSRFLLLSLQKPSADESPDNDKELSSNPDSGKKRKRRVLFSKAQTYELERRFRQQRYLSAPEREHLASLIRLTPTQVKIWFQNHRYKMKRARSEKGMEVTPLPSPRRVAVPVLVRDGKPCHTLKAQDFNPATFPTGIPFSAYSAQSLHHMQYNAQFLFYH</sequence>
<accession>P42587</accession>
<proteinExistence type="evidence at transcript level"/>
<reference key="1">
    <citation type="journal article" date="1993" name="Development">
        <title>A Xenopus homeobox gene defines dorsal-ventral domains in the developing brain.</title>
        <authorList>
            <person name="Saha M.S."/>
            <person name="Michel R.B."/>
            <person name="Gulding K.M."/>
            <person name="Grainger R.M."/>
        </authorList>
    </citation>
    <scope>NUCLEOTIDE SEQUENCE [MRNA]</scope>
    <source>
        <tissue>Embryonic head</tissue>
    </source>
</reference>